<proteinExistence type="evidence at protein level"/>
<evidence type="ECO:0000305" key="1"/>
<reference key="1">
    <citation type="journal article" date="1989" name="FEBS Lett.">
        <title>Amino acid sequence around the thiolester of alpha 2-macroglobulin from plasma of the crayfish, Pacifastacus leniusculus.</title>
        <authorList>
            <person name="Hall M."/>
            <person name="Soederhaell K."/>
            <person name="Sottrup-Jensen L."/>
        </authorList>
    </citation>
    <scope>PROTEIN SEQUENCE</scope>
</reference>
<feature type="chain" id="PRO_0000093793" description="Alpha-2-macroglobulin homolog">
    <location>
        <begin position="1"/>
        <end position="32" status="greater than"/>
    </location>
</feature>
<feature type="cross-link" description="Isoglutamyl cysteine thioester (Cys-Gln)">
    <location>
        <begin position="16"/>
        <end position="19"/>
    </location>
</feature>
<feature type="non-consecutive residues" evidence="1">
    <location>
        <begin position="11"/>
        <end position="12"/>
    </location>
</feature>
<feature type="non-terminal residue">
    <location>
        <position position="32"/>
    </location>
</feature>
<comment type="function">
    <text>Is able to inhibit all four classes of proteinases by a unique 'trapping' mechanism. This protein has a peptide stretch, called the 'bait region' which contains specific cleavage sites for different proteinases. When a proteinase cleaves the bait region, a conformational change is induced in the protein which traps the proteinase. The entrapped enzyme remains active against low molecular weight substrates (activity against high molecular weight substrates is greatly reduced). Following cleavage in the bait region a thioester bond is hydrolyzed and mediates the covalent binding of the protein to the proteinase.</text>
</comment>
<comment type="subunit">
    <text>Homodimer; disulfide-linked.</text>
</comment>
<comment type="subcellular location">
    <subcellularLocation>
        <location>Secreted</location>
    </subcellularLocation>
</comment>
<comment type="similarity">
    <text evidence="1">Belongs to the protease inhibitor I39 (alpha-2-macroglobulin) family.</text>
</comment>
<keyword id="KW-0082">Bait region</keyword>
<keyword id="KW-0903">Direct protein sequencing</keyword>
<keyword id="KW-1015">Disulfide bond</keyword>
<keyword id="KW-0646">Protease inhibitor</keyword>
<keyword id="KW-0964">Secreted</keyword>
<keyword id="KW-0722">Serine protease inhibitor</keyword>
<keyword id="KW-0882">Thioester bond</keyword>
<accession>P20738</accession>
<organism>
    <name type="scientific">Pacifastacus leniusculus</name>
    <name type="common">Signal crayfish</name>
    <dbReference type="NCBI Taxonomy" id="6720"/>
    <lineage>
        <taxon>Eukaryota</taxon>
        <taxon>Metazoa</taxon>
        <taxon>Ecdysozoa</taxon>
        <taxon>Arthropoda</taxon>
        <taxon>Crustacea</taxon>
        <taxon>Multicrustacea</taxon>
        <taxon>Malacostraca</taxon>
        <taxon>Eumalacostraca</taxon>
        <taxon>Eucarida</taxon>
        <taxon>Decapoda</taxon>
        <taxon>Pleocyemata</taxon>
        <taxon>Astacidea</taxon>
        <taxon>Astacoidea</taxon>
        <taxon>Astacidae</taxon>
        <taxon>Pacifastacus</taxon>
    </lineage>
</organism>
<protein>
    <recommendedName>
        <fullName>Alpha-2-macroglobulin homolog</fullName>
        <shortName>Alpha-2-M</shortName>
    </recommendedName>
</protein>
<name>A2M_PACLE</name>
<dbReference type="PIR" id="A32977">
    <property type="entry name" value="A32977"/>
</dbReference>
<dbReference type="PIR" id="S05404">
    <property type="entry name" value="S05404"/>
</dbReference>
<dbReference type="MEROPS" id="I39.007"/>
<dbReference type="GO" id="GO:0005615">
    <property type="term" value="C:extracellular space"/>
    <property type="evidence" value="ECO:0007669"/>
    <property type="project" value="InterPro"/>
</dbReference>
<dbReference type="GO" id="GO:0004867">
    <property type="term" value="F:serine-type endopeptidase inhibitor activity"/>
    <property type="evidence" value="ECO:0007669"/>
    <property type="project" value="UniProtKB-KW"/>
</dbReference>
<dbReference type="Gene3D" id="1.50.10.20">
    <property type="match status" value="1"/>
</dbReference>
<dbReference type="InterPro" id="IPR047565">
    <property type="entry name" value="Alpha-macroglob_thiol-ester_cl"/>
</dbReference>
<dbReference type="InterPro" id="IPR011626">
    <property type="entry name" value="Alpha-macroglobulin_TED"/>
</dbReference>
<dbReference type="InterPro" id="IPR019742">
    <property type="entry name" value="MacrogloblnA2_CS"/>
</dbReference>
<dbReference type="InterPro" id="IPR008930">
    <property type="entry name" value="Terpenoid_cyclase/PrenylTrfase"/>
</dbReference>
<dbReference type="Pfam" id="PF07678">
    <property type="entry name" value="TED_complement"/>
    <property type="match status" value="1"/>
</dbReference>
<dbReference type="SMART" id="SM01419">
    <property type="entry name" value="Thiol-ester_cl"/>
    <property type="match status" value="1"/>
</dbReference>
<dbReference type="SUPFAM" id="SSF48239">
    <property type="entry name" value="Terpenoid cyclases/Protein prenyltransferases"/>
    <property type="match status" value="1"/>
</dbReference>
<dbReference type="PROSITE" id="PS00477">
    <property type="entry name" value="ALPHA_2_MACROGLOBULIN"/>
    <property type="match status" value="1"/>
</dbReference>
<sequence>SYVITTPKMWVMPYGCGEQNMVNFAPNIFIME</sequence>